<accession>P36980</accession>
<accession>Q14310</accession>
<accession>Q5T9T1</accession>
<dbReference type="EMBL" id="X64877">
    <property type="protein sequence ID" value="CAA46096.1"/>
    <property type="molecule type" value="mRNA"/>
</dbReference>
<dbReference type="EMBL" id="X86564">
    <property type="protein sequence ID" value="CAA60375.1"/>
    <property type="molecule type" value="Genomic_DNA"/>
</dbReference>
<dbReference type="EMBL" id="X86565">
    <property type="protein sequence ID" value="CAA60375.1"/>
    <property type="status" value="JOINED"/>
    <property type="molecule type" value="Genomic_DNA"/>
</dbReference>
<dbReference type="EMBL" id="X86566">
    <property type="protein sequence ID" value="CAA60375.1"/>
    <property type="status" value="JOINED"/>
    <property type="molecule type" value="Genomic_DNA"/>
</dbReference>
<dbReference type="EMBL" id="X86567">
    <property type="protein sequence ID" value="CAA60375.1"/>
    <property type="status" value="JOINED"/>
    <property type="molecule type" value="Genomic_DNA"/>
</dbReference>
<dbReference type="EMBL" id="AL139418">
    <property type="status" value="NOT_ANNOTATED_CDS"/>
    <property type="molecule type" value="Genomic_DNA"/>
</dbReference>
<dbReference type="EMBL" id="BC022283">
    <property type="protein sequence ID" value="AAH22283.1"/>
    <property type="molecule type" value="mRNA"/>
</dbReference>
<dbReference type="CCDS" id="CCDS30959.1">
    <molecule id="P36980-1"/>
</dbReference>
<dbReference type="PIR" id="I37278">
    <property type="entry name" value="I37278"/>
</dbReference>
<dbReference type="RefSeq" id="NP_001299601.1">
    <property type="nucleotide sequence ID" value="NM_001312672.1"/>
</dbReference>
<dbReference type="RefSeq" id="NP_005657.1">
    <molecule id="P36980-1"/>
    <property type="nucleotide sequence ID" value="NM_005666.4"/>
</dbReference>
<dbReference type="PDB" id="3ZD1">
    <property type="method" value="X-ray"/>
    <property type="resolution" value="2.00 A"/>
    <property type="chains" value="A/B=147-270"/>
</dbReference>
<dbReference type="PDB" id="5EA0">
    <property type="method" value="X-ray"/>
    <property type="resolution" value="2.00 A"/>
    <property type="chains" value="P=150-162"/>
</dbReference>
<dbReference type="PDBsum" id="3ZD1"/>
<dbReference type="PDBsum" id="5EA0"/>
<dbReference type="SMR" id="P36980"/>
<dbReference type="BioGRID" id="109328">
    <property type="interactions" value="6"/>
</dbReference>
<dbReference type="FunCoup" id="P36980">
    <property type="interactions" value="85"/>
</dbReference>
<dbReference type="IntAct" id="P36980">
    <property type="interactions" value="3"/>
</dbReference>
<dbReference type="STRING" id="9606.ENSP00000356385"/>
<dbReference type="GlyConnect" id="1153">
    <property type="glycosylation" value="4 N-Linked glycans (1 site)"/>
</dbReference>
<dbReference type="GlyCosmos" id="P36980">
    <property type="glycosylation" value="1 site, 5 glycans"/>
</dbReference>
<dbReference type="GlyGen" id="P36980">
    <property type="glycosylation" value="1 site, 5 N-linked glycans (1 site)"/>
</dbReference>
<dbReference type="iPTMnet" id="P36980"/>
<dbReference type="PhosphoSitePlus" id="P36980"/>
<dbReference type="BioMuta" id="CFHR2"/>
<dbReference type="DMDM" id="543983"/>
<dbReference type="jPOST" id="P36980"/>
<dbReference type="MassIVE" id="P36980"/>
<dbReference type="PaxDb" id="9606-ENSP00000356385"/>
<dbReference type="PeptideAtlas" id="P36980"/>
<dbReference type="ProteomicsDB" id="55252">
    <molecule id="P36980-1"/>
</dbReference>
<dbReference type="ProteomicsDB" id="55253">
    <molecule id="P36980-2"/>
</dbReference>
<dbReference type="Antibodypedia" id="34882">
    <property type="antibodies" value="170 antibodies from 18 providers"/>
</dbReference>
<dbReference type="DNASU" id="3080"/>
<dbReference type="Ensembl" id="ENST00000367415.8">
    <molecule id="P36980-1"/>
    <property type="protein sequence ID" value="ENSP00000356385.4"/>
    <property type="gene ID" value="ENSG00000080910.14"/>
</dbReference>
<dbReference type="Ensembl" id="ENST00000709546.1">
    <molecule id="P36980-1"/>
    <property type="protein sequence ID" value="ENSP00000517754.1"/>
    <property type="gene ID" value="ENSG00000292003.1"/>
</dbReference>
<dbReference type="GeneID" id="3080"/>
<dbReference type="KEGG" id="hsa:3080"/>
<dbReference type="MANE-Select" id="ENST00000367415.8">
    <property type="protein sequence ID" value="ENSP00000356385.4"/>
    <property type="RefSeq nucleotide sequence ID" value="NM_005666.4"/>
    <property type="RefSeq protein sequence ID" value="NP_005657.1"/>
</dbReference>
<dbReference type="UCSC" id="uc001gtq.2">
    <molecule id="P36980-1"/>
    <property type="organism name" value="human"/>
</dbReference>
<dbReference type="AGR" id="HGNC:4890"/>
<dbReference type="CTD" id="3080"/>
<dbReference type="DisGeNET" id="3080"/>
<dbReference type="GeneCards" id="CFHR2"/>
<dbReference type="HGNC" id="HGNC:4890">
    <property type="gene designation" value="CFHR2"/>
</dbReference>
<dbReference type="HPA" id="ENSG00000080910">
    <property type="expression patterns" value="Tissue enriched (liver)"/>
</dbReference>
<dbReference type="MalaCards" id="CFHR2"/>
<dbReference type="MIM" id="600889">
    <property type="type" value="gene"/>
</dbReference>
<dbReference type="neXtProt" id="NX_P36980"/>
<dbReference type="OpenTargets" id="ENSG00000080910"/>
<dbReference type="Orphanet" id="329931">
    <property type="disease" value="C3 glomerulonephritis"/>
</dbReference>
<dbReference type="PharmGKB" id="PA29267"/>
<dbReference type="VEuPathDB" id="HostDB:ENSG00000080910"/>
<dbReference type="eggNOG" id="ENOG502RTVV">
    <property type="taxonomic scope" value="Eukaryota"/>
</dbReference>
<dbReference type="GeneTree" id="ENSGT00940000163634"/>
<dbReference type="HOGENOM" id="CLU_020107_3_0_1"/>
<dbReference type="InParanoid" id="P36980"/>
<dbReference type="OMA" id="SCDHSFA"/>
<dbReference type="OrthoDB" id="9510019at2759"/>
<dbReference type="PAN-GO" id="P36980">
    <property type="GO annotations" value="3 GO annotations based on evolutionary models"/>
</dbReference>
<dbReference type="PhylomeDB" id="P36980"/>
<dbReference type="TreeFam" id="TF326157"/>
<dbReference type="PathwayCommons" id="P36980"/>
<dbReference type="Reactome" id="R-HSA-977606">
    <property type="pathway name" value="Regulation of Complement cascade"/>
</dbReference>
<dbReference type="SignaLink" id="P36980"/>
<dbReference type="BioGRID-ORCS" id="3080">
    <property type="hits" value="9 hits in 1050 CRISPR screens"/>
</dbReference>
<dbReference type="EvolutionaryTrace" id="P36980"/>
<dbReference type="GeneWiki" id="CFHR2"/>
<dbReference type="GenomeRNAi" id="3080"/>
<dbReference type="Pharos" id="P36980">
    <property type="development level" value="Tbio"/>
</dbReference>
<dbReference type="PRO" id="PR:P36980"/>
<dbReference type="Proteomes" id="UP000005640">
    <property type="component" value="Chromosome 1"/>
</dbReference>
<dbReference type="RNAct" id="P36980">
    <property type="molecule type" value="protein"/>
</dbReference>
<dbReference type="Bgee" id="ENSG00000080910">
    <property type="expression patterns" value="Expressed in right lobe of liver and 114 other cell types or tissues"/>
</dbReference>
<dbReference type="ExpressionAtlas" id="P36980">
    <property type="expression patterns" value="baseline and differential"/>
</dbReference>
<dbReference type="GO" id="GO:0005576">
    <property type="term" value="C:extracellular region"/>
    <property type="evidence" value="ECO:0000304"/>
    <property type="project" value="Reactome"/>
</dbReference>
<dbReference type="GO" id="GO:0005615">
    <property type="term" value="C:extracellular space"/>
    <property type="evidence" value="ECO:0000318"/>
    <property type="project" value="GO_Central"/>
</dbReference>
<dbReference type="GO" id="GO:0032991">
    <property type="term" value="C:protein-containing complex"/>
    <property type="evidence" value="ECO:0000314"/>
    <property type="project" value="UniProtKB"/>
</dbReference>
<dbReference type="GO" id="GO:0001851">
    <property type="term" value="F:complement component C3b binding"/>
    <property type="evidence" value="ECO:0000318"/>
    <property type="project" value="GO_Central"/>
</dbReference>
<dbReference type="GO" id="GO:0042802">
    <property type="term" value="F:identical protein binding"/>
    <property type="evidence" value="ECO:0000353"/>
    <property type="project" value="UniProtKB"/>
</dbReference>
<dbReference type="GO" id="GO:0006956">
    <property type="term" value="P:complement activation"/>
    <property type="evidence" value="ECO:0000318"/>
    <property type="project" value="GO_Central"/>
</dbReference>
<dbReference type="GO" id="GO:0051838">
    <property type="term" value="P:cytolysis by host of symbiont cells"/>
    <property type="evidence" value="ECO:0000315"/>
    <property type="project" value="UniProtKB"/>
</dbReference>
<dbReference type="GO" id="GO:0032091">
    <property type="term" value="P:negative regulation of protein binding"/>
    <property type="evidence" value="ECO:0000315"/>
    <property type="project" value="UniProtKB"/>
</dbReference>
<dbReference type="CDD" id="cd00033">
    <property type="entry name" value="CCP"/>
    <property type="match status" value="2"/>
</dbReference>
<dbReference type="FunFam" id="2.10.70.10:FF:000131">
    <property type="entry name" value="Complement factor H-related protein 1"/>
    <property type="match status" value="1"/>
</dbReference>
<dbReference type="FunFam" id="2.10.70.10:FF:000026">
    <property type="entry name" value="Complement inhibitory factor H"/>
    <property type="match status" value="1"/>
</dbReference>
<dbReference type="FunFam" id="2.10.70.10:FF:000054">
    <property type="entry name" value="Complement inhibitory factor H"/>
    <property type="match status" value="1"/>
</dbReference>
<dbReference type="FunFam" id="2.10.70.10:FF:000060">
    <property type="entry name" value="Complement inhibitory factor H"/>
    <property type="match status" value="1"/>
</dbReference>
<dbReference type="Gene3D" id="2.10.70.10">
    <property type="entry name" value="Complement Module, domain 1"/>
    <property type="match status" value="4"/>
</dbReference>
<dbReference type="InterPro" id="IPR051503">
    <property type="entry name" value="ComplSys_Reg/VirEntry_Med"/>
</dbReference>
<dbReference type="InterPro" id="IPR035976">
    <property type="entry name" value="Sushi/SCR/CCP_sf"/>
</dbReference>
<dbReference type="InterPro" id="IPR000436">
    <property type="entry name" value="Sushi_SCR_CCP_dom"/>
</dbReference>
<dbReference type="PANTHER" id="PTHR45785">
    <property type="entry name" value="COMPLEMENT FACTOR H-RELATED"/>
    <property type="match status" value="1"/>
</dbReference>
<dbReference type="PANTHER" id="PTHR45785:SF12">
    <property type="entry name" value="COMPLEMENT FACTOR H-RELATED PROTEIN 1-RELATED"/>
    <property type="match status" value="1"/>
</dbReference>
<dbReference type="Pfam" id="PF00084">
    <property type="entry name" value="Sushi"/>
    <property type="match status" value="4"/>
</dbReference>
<dbReference type="SMART" id="SM00032">
    <property type="entry name" value="CCP"/>
    <property type="match status" value="4"/>
</dbReference>
<dbReference type="SUPFAM" id="SSF57535">
    <property type="entry name" value="Complement control module/SCR domain"/>
    <property type="match status" value="4"/>
</dbReference>
<dbReference type="PROSITE" id="PS50923">
    <property type="entry name" value="SUSHI"/>
    <property type="match status" value="2"/>
</dbReference>
<proteinExistence type="evidence at protein level"/>
<name>FHR2_HUMAN</name>
<feature type="signal peptide" evidence="2">
    <location>
        <begin position="1"/>
        <end position="18"/>
    </location>
</feature>
<feature type="chain" id="PRO_0000005897" description="Complement factor H-related protein 2">
    <location>
        <begin position="19"/>
        <end position="270"/>
    </location>
</feature>
<feature type="domain" description="Sushi 1" evidence="1">
    <location>
        <begin position="22"/>
        <end position="84"/>
    </location>
</feature>
<feature type="domain" description="Sushi 2" evidence="1">
    <location>
        <begin position="85"/>
        <end position="142"/>
    </location>
</feature>
<feature type="domain" description="Sushi 3" evidence="1">
    <location>
        <begin position="147"/>
        <end position="205"/>
    </location>
</feature>
<feature type="domain" description="Sushi 4" evidence="1">
    <location>
        <begin position="206"/>
        <end position="268"/>
    </location>
</feature>
<feature type="glycosylation site" description="N-linked (GlcNAc...) asparagine" evidence="2 3">
    <location>
        <position position="126"/>
    </location>
</feature>
<feature type="disulfide bond" evidence="1">
    <location>
        <begin position="23"/>
        <end position="72"/>
    </location>
</feature>
<feature type="disulfide bond" evidence="1">
    <location>
        <begin position="55"/>
        <end position="83"/>
    </location>
</feature>
<feature type="disulfide bond" evidence="1">
    <location>
        <begin position="87"/>
        <end position="129"/>
    </location>
</feature>
<feature type="disulfide bond" evidence="1">
    <location>
        <begin position="114"/>
        <end position="140"/>
    </location>
</feature>
<feature type="disulfide bond" evidence="1 4">
    <location>
        <begin position="149"/>
        <end position="192"/>
    </location>
</feature>
<feature type="disulfide bond" evidence="1 4">
    <location>
        <begin position="178"/>
        <end position="203"/>
    </location>
</feature>
<feature type="disulfide bond" evidence="1 4">
    <location>
        <begin position="207"/>
        <end position="257"/>
    </location>
</feature>
<feature type="disulfide bond" evidence="1 4">
    <location>
        <begin position="241"/>
        <end position="267"/>
    </location>
</feature>
<feature type="splice variant" id="VSP_001192" description="In isoform Short." evidence="5">
    <original>ISAEKCGPPPPIDNGDITSFLLSVYAPG</original>
    <variation>S</variation>
    <location>
        <begin position="144"/>
        <end position="171"/>
    </location>
</feature>
<feature type="sequence conflict" description="In Ref. 2; CAA60375." evidence="5" ref="2">
    <original>R</original>
    <variation>K</variation>
    <location>
        <position position="85"/>
    </location>
</feature>
<feature type="strand" evidence="6">
    <location>
        <begin position="158"/>
        <end position="162"/>
    </location>
</feature>
<feature type="strand" evidence="6">
    <location>
        <begin position="173"/>
        <end position="178"/>
    </location>
</feature>
<feature type="strand" evidence="6">
    <location>
        <begin position="183"/>
        <end position="186"/>
    </location>
</feature>
<feature type="strand" evidence="6">
    <location>
        <begin position="188"/>
        <end position="193"/>
    </location>
</feature>
<feature type="strand" evidence="6">
    <location>
        <begin position="202"/>
        <end position="204"/>
    </location>
</feature>
<feature type="helix" evidence="6">
    <location>
        <begin position="211"/>
        <end position="216"/>
    </location>
</feature>
<feature type="strand" evidence="6">
    <location>
        <begin position="219"/>
        <end position="222"/>
    </location>
</feature>
<feature type="turn" evidence="6">
    <location>
        <begin position="224"/>
        <end position="226"/>
    </location>
</feature>
<feature type="strand" evidence="6">
    <location>
        <begin position="229"/>
        <end position="231"/>
    </location>
</feature>
<feature type="strand" evidence="6">
    <location>
        <begin position="236"/>
        <end position="241"/>
    </location>
</feature>
<feature type="strand" evidence="6">
    <location>
        <begin position="249"/>
        <end position="251"/>
    </location>
</feature>
<feature type="strand" evidence="6">
    <location>
        <begin position="253"/>
        <end position="256"/>
    </location>
</feature>
<protein>
    <recommendedName>
        <fullName>Complement factor H-related protein 2</fullName>
        <shortName>FHR-2</shortName>
    </recommendedName>
    <alternativeName>
        <fullName>DDESK59</fullName>
    </alternativeName>
    <alternativeName>
        <fullName>H factor-like 3</fullName>
    </alternativeName>
    <alternativeName>
        <fullName>H factor-like protein 2</fullName>
    </alternativeName>
</protein>
<evidence type="ECO:0000255" key="1">
    <source>
        <dbReference type="PROSITE-ProRule" id="PRU00302"/>
    </source>
</evidence>
<evidence type="ECO:0000269" key="2">
    <source>
    </source>
</evidence>
<evidence type="ECO:0000269" key="3">
    <source>
    </source>
</evidence>
<evidence type="ECO:0000269" key="4">
    <source>
    </source>
</evidence>
<evidence type="ECO:0000305" key="5"/>
<evidence type="ECO:0007829" key="6">
    <source>
        <dbReference type="PDB" id="3ZD1"/>
    </source>
</evidence>
<comment type="function">
    <text evidence="4">Involved in complement regulation. The dimerized forms have avidity for tissue-bound complement fragments and efficiently compete with the physiological complement inhibitor CFH. Can associate with lipoproteins and may play a role in lipid metabolism.</text>
</comment>
<comment type="subunit">
    <text evidence="4">Head-to-tail homodimer and heterodimer with CFHR1 or CFHR5.</text>
</comment>
<comment type="interaction">
    <interactant intactId="EBI-21976709">
        <id>P36980</id>
    </interactant>
    <interactant intactId="EBI-3935840">
        <id>Q03591</id>
        <label>CFHR1</label>
    </interactant>
    <organismsDiffer>false</organismsDiffer>
    <experiments>5</experiments>
</comment>
<comment type="interaction">
    <interactant intactId="EBI-21976709">
        <id>P36980</id>
    </interactant>
    <interactant intactId="EBI-21976709">
        <id>P36980</id>
        <label>CFHR2</label>
    </interactant>
    <organismsDiffer>false</organismsDiffer>
    <experiments>2</experiments>
</comment>
<comment type="interaction">
    <interactant intactId="EBI-21988278">
        <id>PRO_0000005897</id>
    </interactant>
    <interactant intactId="EBI-21988425">
        <id>PRO_0000005913</id>
        <label>C3</label>
        <dbReference type="UniProtKB" id="P01024"/>
    </interactant>
    <organismsDiffer>false</organismsDiffer>
    <experiments>2</experiments>
</comment>
<comment type="interaction">
    <interactant intactId="EBI-21988278">
        <id>PRO_0000005897</id>
    </interactant>
    <interactant intactId="EBI-6863106">
        <id>PRO_0000005915</id>
        <label>C3</label>
        <dbReference type="UniProtKB" id="P01024"/>
    </interactant>
    <organismsDiffer>false</organismsDiffer>
    <experiments>3</experiments>
</comment>
<comment type="subcellular location">
    <subcellularLocation>
        <location>Secreted</location>
    </subcellularLocation>
</comment>
<comment type="alternative products">
    <event type="alternative splicing"/>
    <isoform>
        <id>P36980-1</id>
        <name>Long</name>
        <sequence type="displayed"/>
    </isoform>
    <isoform>
        <id>P36980-2</id>
        <name>Short</name>
        <name>Truncated</name>
        <sequence type="described" ref="VSP_001192"/>
    </isoform>
</comment>
<comment type="tissue specificity">
    <text>Expressed by the liver and secreted in plasma.</text>
</comment>
<comment type="PTM">
    <text evidence="2 3">N-glycosylated.</text>
</comment>
<keyword id="KW-0002">3D-structure</keyword>
<keyword id="KW-0025">Alternative splicing</keyword>
<keyword id="KW-0903">Direct protein sequencing</keyword>
<keyword id="KW-1015">Disulfide bond</keyword>
<keyword id="KW-0325">Glycoprotein</keyword>
<keyword id="KW-1267">Proteomics identification</keyword>
<keyword id="KW-1185">Reference proteome</keyword>
<keyword id="KW-0677">Repeat</keyword>
<keyword id="KW-0964">Secreted</keyword>
<keyword id="KW-0732">Signal</keyword>
<keyword id="KW-0768">Sushi</keyword>
<gene>
    <name type="primary">CFHR2</name>
    <name type="synonym">CFHL2</name>
    <name type="synonym">FHR2</name>
    <name type="synonym">HFL3</name>
</gene>
<sequence length="270" mass="30651">MWLLVSVILISRISSVGGEAMFCDFPKINHGILYDEEKYKPFSQVPTGEVFYYSCEYNFVSPSKSFWTRITCAEEGWSPTPKCLRLCFFPFVENGHSESSGQTHLEGDTVQIICNTGYRLQNNENNISCVERGWSTPPKCRSTISAEKCGPPPPIDNGDITSFLLSVYAPGSSVEYQCQNLYQLEGNNQITCRNGQWSEPPKCLDPCVISQEIMEKYNIKLKWTNQQKLYSRTGDIVEFVCKSGYHPTKSHSFRAMCQNGKLVYPSCEEK</sequence>
<organism>
    <name type="scientific">Homo sapiens</name>
    <name type="common">Human</name>
    <dbReference type="NCBI Taxonomy" id="9606"/>
    <lineage>
        <taxon>Eukaryota</taxon>
        <taxon>Metazoa</taxon>
        <taxon>Chordata</taxon>
        <taxon>Craniata</taxon>
        <taxon>Vertebrata</taxon>
        <taxon>Euteleostomi</taxon>
        <taxon>Mammalia</taxon>
        <taxon>Eutheria</taxon>
        <taxon>Euarchontoglires</taxon>
        <taxon>Primates</taxon>
        <taxon>Haplorrhini</taxon>
        <taxon>Catarrhini</taxon>
        <taxon>Hominidae</taxon>
        <taxon>Homo</taxon>
    </lineage>
</organism>
<reference key="1">
    <citation type="journal article" date="1992" name="J. Immunol.">
        <title>Two additional human serum proteins structurally related to complement factor H. Evidence for a family of factor H-related genes.</title>
        <authorList>
            <person name="Skerka C."/>
            <person name="Timman C."/>
            <person name="Horstmann R.D."/>
            <person name="Zipfel P.E."/>
        </authorList>
    </citation>
    <scope>NUCLEOTIDE SEQUENCE [MRNA] (ISOFORM LONG)</scope>
    <scope>PROTEIN SEQUENCE OF 19-37</scope>
    <scope>GLYCOSYLATION AT ASN-126</scope>
    <source>
        <tissue>Liver</tissue>
    </source>
</reference>
<reference key="2">
    <citation type="journal article" date="1995" name="Immunogenetics">
        <title>The human factor H-related gene 2 (FHR2): structure and linkage to the coagulation factor XIIIb gene.</title>
        <authorList>
            <person name="Skerka C."/>
            <person name="Moulds J.M."/>
            <person name="Taillon-Miller P."/>
            <person name="Hourcade D."/>
            <person name="Zipfel P.F."/>
        </authorList>
    </citation>
    <scope>NUCLEOTIDE SEQUENCE [GENOMIC DNA]</scope>
    <scope>ALTERNATIVE SPLICING</scope>
</reference>
<reference key="3">
    <citation type="journal article" date="2006" name="Nature">
        <title>The DNA sequence and biological annotation of human chromosome 1.</title>
        <authorList>
            <person name="Gregory S.G."/>
            <person name="Barlow K.F."/>
            <person name="McLay K.E."/>
            <person name="Kaul R."/>
            <person name="Swarbreck D."/>
            <person name="Dunham A."/>
            <person name="Scott C.E."/>
            <person name="Howe K.L."/>
            <person name="Woodfine K."/>
            <person name="Spencer C.C.A."/>
            <person name="Jones M.C."/>
            <person name="Gillson C."/>
            <person name="Searle S."/>
            <person name="Zhou Y."/>
            <person name="Kokocinski F."/>
            <person name="McDonald L."/>
            <person name="Evans R."/>
            <person name="Phillips K."/>
            <person name="Atkinson A."/>
            <person name="Cooper R."/>
            <person name="Jones C."/>
            <person name="Hall R.E."/>
            <person name="Andrews T.D."/>
            <person name="Lloyd C."/>
            <person name="Ainscough R."/>
            <person name="Almeida J.P."/>
            <person name="Ambrose K.D."/>
            <person name="Anderson F."/>
            <person name="Andrew R.W."/>
            <person name="Ashwell R.I.S."/>
            <person name="Aubin K."/>
            <person name="Babbage A.K."/>
            <person name="Bagguley C.L."/>
            <person name="Bailey J."/>
            <person name="Beasley H."/>
            <person name="Bethel G."/>
            <person name="Bird C.P."/>
            <person name="Bray-Allen S."/>
            <person name="Brown J.Y."/>
            <person name="Brown A.J."/>
            <person name="Buckley D."/>
            <person name="Burton J."/>
            <person name="Bye J."/>
            <person name="Carder C."/>
            <person name="Chapman J.C."/>
            <person name="Clark S.Y."/>
            <person name="Clarke G."/>
            <person name="Clee C."/>
            <person name="Cobley V."/>
            <person name="Collier R.E."/>
            <person name="Corby N."/>
            <person name="Coville G.J."/>
            <person name="Davies J."/>
            <person name="Deadman R."/>
            <person name="Dunn M."/>
            <person name="Earthrowl M."/>
            <person name="Ellington A.G."/>
            <person name="Errington H."/>
            <person name="Frankish A."/>
            <person name="Frankland J."/>
            <person name="French L."/>
            <person name="Garner P."/>
            <person name="Garnett J."/>
            <person name="Gay L."/>
            <person name="Ghori M.R.J."/>
            <person name="Gibson R."/>
            <person name="Gilby L.M."/>
            <person name="Gillett W."/>
            <person name="Glithero R.J."/>
            <person name="Grafham D.V."/>
            <person name="Griffiths C."/>
            <person name="Griffiths-Jones S."/>
            <person name="Grocock R."/>
            <person name="Hammond S."/>
            <person name="Harrison E.S.I."/>
            <person name="Hart E."/>
            <person name="Haugen E."/>
            <person name="Heath P.D."/>
            <person name="Holmes S."/>
            <person name="Holt K."/>
            <person name="Howden P.J."/>
            <person name="Hunt A.R."/>
            <person name="Hunt S.E."/>
            <person name="Hunter G."/>
            <person name="Isherwood J."/>
            <person name="James R."/>
            <person name="Johnson C."/>
            <person name="Johnson D."/>
            <person name="Joy A."/>
            <person name="Kay M."/>
            <person name="Kershaw J.K."/>
            <person name="Kibukawa M."/>
            <person name="Kimberley A.M."/>
            <person name="King A."/>
            <person name="Knights A.J."/>
            <person name="Lad H."/>
            <person name="Laird G."/>
            <person name="Lawlor S."/>
            <person name="Leongamornlert D.A."/>
            <person name="Lloyd D.M."/>
            <person name="Loveland J."/>
            <person name="Lovell J."/>
            <person name="Lush M.J."/>
            <person name="Lyne R."/>
            <person name="Martin S."/>
            <person name="Mashreghi-Mohammadi M."/>
            <person name="Matthews L."/>
            <person name="Matthews N.S.W."/>
            <person name="McLaren S."/>
            <person name="Milne S."/>
            <person name="Mistry S."/>
            <person name="Moore M.J.F."/>
            <person name="Nickerson T."/>
            <person name="O'Dell C.N."/>
            <person name="Oliver K."/>
            <person name="Palmeiri A."/>
            <person name="Palmer S.A."/>
            <person name="Parker A."/>
            <person name="Patel D."/>
            <person name="Pearce A.V."/>
            <person name="Peck A.I."/>
            <person name="Pelan S."/>
            <person name="Phelps K."/>
            <person name="Phillimore B.J."/>
            <person name="Plumb R."/>
            <person name="Rajan J."/>
            <person name="Raymond C."/>
            <person name="Rouse G."/>
            <person name="Saenphimmachak C."/>
            <person name="Sehra H.K."/>
            <person name="Sheridan E."/>
            <person name="Shownkeen R."/>
            <person name="Sims S."/>
            <person name="Skuce C.D."/>
            <person name="Smith M."/>
            <person name="Steward C."/>
            <person name="Subramanian S."/>
            <person name="Sycamore N."/>
            <person name="Tracey A."/>
            <person name="Tromans A."/>
            <person name="Van Helmond Z."/>
            <person name="Wall M."/>
            <person name="Wallis J.M."/>
            <person name="White S."/>
            <person name="Whitehead S.L."/>
            <person name="Wilkinson J.E."/>
            <person name="Willey D.L."/>
            <person name="Williams H."/>
            <person name="Wilming L."/>
            <person name="Wray P.W."/>
            <person name="Wu Z."/>
            <person name="Coulson A."/>
            <person name="Vaudin M."/>
            <person name="Sulston J.E."/>
            <person name="Durbin R.M."/>
            <person name="Hubbard T."/>
            <person name="Wooster R."/>
            <person name="Dunham I."/>
            <person name="Carter N.P."/>
            <person name="McVean G."/>
            <person name="Ross M.T."/>
            <person name="Harrow J."/>
            <person name="Olson M.V."/>
            <person name="Beck S."/>
            <person name="Rogers J."/>
            <person name="Bentley D.R."/>
        </authorList>
    </citation>
    <scope>NUCLEOTIDE SEQUENCE [LARGE SCALE GENOMIC DNA]</scope>
</reference>
<reference key="4">
    <citation type="journal article" date="2004" name="Genome Res.">
        <title>The status, quality, and expansion of the NIH full-length cDNA project: the Mammalian Gene Collection (MGC).</title>
        <authorList>
            <consortium name="The MGC Project Team"/>
        </authorList>
    </citation>
    <scope>NUCLEOTIDE SEQUENCE [LARGE SCALE MRNA] (ISOFORM LONG)</scope>
    <source>
        <tissue>Liver</tissue>
    </source>
</reference>
<reference key="5">
    <citation type="journal article" date="1994" name="Immunol. Today">
        <title>Complement factor H and related proteins: an expanding family of complement-regulatory proteins?</title>
        <authorList>
            <person name="Zipfel P.F."/>
            <person name="Skerka C."/>
        </authorList>
    </citation>
    <scope>REVIEW</scope>
</reference>
<reference key="6">
    <citation type="journal article" date="2009" name="J. Proteome Res.">
        <title>Glycoproteomics analysis of human liver tissue by combination of multiple enzyme digestion and hydrazide chemistry.</title>
        <authorList>
            <person name="Chen R."/>
            <person name="Jiang X."/>
            <person name="Sun D."/>
            <person name="Han G."/>
            <person name="Wang F."/>
            <person name="Ye M."/>
            <person name="Wang L."/>
            <person name="Zou H."/>
        </authorList>
    </citation>
    <scope>GLYCOSYLATION [LARGE SCALE ANALYSIS] AT ASN-126</scope>
    <source>
        <tissue>Liver</tissue>
    </source>
</reference>
<reference key="7">
    <citation type="journal article" date="2013" name="Proc. Natl. Acad. Sci. U.S.A.">
        <title>Dimerization of complement factor H-related proteins modulates complement activation in vivo.</title>
        <authorList>
            <person name="Goicoechea de Jorge E."/>
            <person name="Caesar J.J."/>
            <person name="Malik T.H."/>
            <person name="Patel M."/>
            <person name="Colledge M."/>
            <person name="Johnson S."/>
            <person name="Hakobyan S."/>
            <person name="Morgan B.P."/>
            <person name="Harris C.L."/>
            <person name="Pickering M.C."/>
            <person name="Lea S.M."/>
        </authorList>
    </citation>
    <scope>X-RAY CRYSTALLOGRAPHY (2.0 ANGSTROMS) OF 147-270</scope>
    <scope>FUNCTION</scope>
    <scope>SUBUNIT</scope>
    <scope>DISULFIDE BONDS</scope>
</reference>